<evidence type="ECO:0000250" key="1"/>
<evidence type="ECO:0000250" key="2">
    <source>
        <dbReference type="UniProtKB" id="P26687"/>
    </source>
</evidence>
<evidence type="ECO:0000255" key="3">
    <source>
        <dbReference type="PROSITE-ProRule" id="PRU00981"/>
    </source>
</evidence>
<evidence type="ECO:0000256" key="4">
    <source>
        <dbReference type="SAM" id="MobiDB-lite"/>
    </source>
</evidence>
<evidence type="ECO:0000269" key="5">
    <source>
    </source>
</evidence>
<evidence type="ECO:0000269" key="6">
    <source>
    </source>
</evidence>
<evidence type="ECO:0000269" key="7">
    <source>
    </source>
</evidence>
<evidence type="ECO:0000269" key="8">
    <source>
    </source>
</evidence>
<evidence type="ECO:0000269" key="9">
    <source>
    </source>
</evidence>
<evidence type="ECO:0000269" key="10">
    <source>
    </source>
</evidence>
<evidence type="ECO:0000269" key="11">
    <source>
    </source>
</evidence>
<evidence type="ECO:0000269" key="12">
    <source>
    </source>
</evidence>
<evidence type="ECO:0000305" key="13"/>
<evidence type="ECO:0007829" key="14">
    <source>
        <dbReference type="PDB" id="8OSB"/>
    </source>
</evidence>
<gene>
    <name type="primary">TWIST1</name>
    <name type="synonym">BHLHA38</name>
    <name type="synonym">TWIST</name>
</gene>
<sequence>MMQDVSSSPVSPADDSLSNSEEEPDRQQPPSGKRGGRKRRSSRRSAGGGAGPGGAAGGGVGGGDEPGSPAQGKRGKKSAGCGGGGGAGGGGGSSSGGGSPQSYEELQTQRVMANVRERQRTQSLNEAFAALRKIIPTLPSDKLSKIQTLKLAARYIDFLYQVLQSDELDSKMASCSYVAHERLSYAFSVWRMEGAWSMSASH</sequence>
<protein>
    <recommendedName>
        <fullName>Twist-related protein 1</fullName>
    </recommendedName>
    <alternativeName>
        <fullName>Class A basic helix-loop-helix protein 38</fullName>
        <shortName>bHLHa38</shortName>
    </alternativeName>
    <alternativeName>
        <fullName>H-twist</fullName>
    </alternativeName>
</protein>
<dbReference type="EMBL" id="X91662">
    <property type="protein sequence ID" value="CAA62850.1"/>
    <property type="molecule type" value="Genomic_DNA"/>
</dbReference>
<dbReference type="EMBL" id="X99268">
    <property type="protein sequence ID" value="CAA67664.1"/>
    <property type="molecule type" value="mRNA"/>
</dbReference>
<dbReference type="EMBL" id="U80998">
    <property type="protein sequence ID" value="AAC50930.1"/>
    <property type="molecule type" value="Genomic_DNA"/>
</dbReference>
<dbReference type="EMBL" id="Y10871">
    <property type="protein sequence ID" value="CAA71821.1"/>
    <property type="molecule type" value="Genomic_DNA"/>
</dbReference>
<dbReference type="EMBL" id="AC003986">
    <property type="protein sequence ID" value="AAC60381.2"/>
    <property type="molecule type" value="Genomic_DNA"/>
</dbReference>
<dbReference type="EMBL" id="CH236948">
    <property type="protein sequence ID" value="EAL24279.1"/>
    <property type="molecule type" value="Genomic_DNA"/>
</dbReference>
<dbReference type="EMBL" id="BC036704">
    <property type="protein sequence ID" value="AAH36704.1"/>
    <property type="molecule type" value="mRNA"/>
</dbReference>
<dbReference type="CCDS" id="CCDS5367.1"/>
<dbReference type="PIR" id="G01204">
    <property type="entry name" value="G01204"/>
</dbReference>
<dbReference type="RefSeq" id="NP_000465.1">
    <property type="nucleotide sequence ID" value="NM_000474.4"/>
</dbReference>
<dbReference type="RefSeq" id="XP_011513798.1">
    <property type="nucleotide sequence ID" value="XM_011515496.1"/>
</dbReference>
<dbReference type="PDB" id="2MJV">
    <property type="method" value="NMR"/>
    <property type="chains" value="A=68-79"/>
</dbReference>
<dbReference type="PDB" id="8OSB">
    <property type="method" value="X-ray"/>
    <property type="resolution" value="2.90 A"/>
    <property type="chains" value="B=101-167"/>
</dbReference>
<dbReference type="PDBsum" id="2MJV"/>
<dbReference type="PDBsum" id="8OSB"/>
<dbReference type="SMR" id="Q15672"/>
<dbReference type="BioGRID" id="113142">
    <property type="interactions" value="67"/>
</dbReference>
<dbReference type="CORUM" id="Q15672"/>
<dbReference type="DIP" id="DIP-45974N"/>
<dbReference type="FunCoup" id="Q15672">
    <property type="interactions" value="1314"/>
</dbReference>
<dbReference type="IntAct" id="Q15672">
    <property type="interactions" value="33"/>
</dbReference>
<dbReference type="MINT" id="Q15672"/>
<dbReference type="STRING" id="9606.ENSP00000242261"/>
<dbReference type="GlyGen" id="Q15672">
    <property type="glycosylation" value="3 sites, 1 O-linked glycan (3 sites)"/>
</dbReference>
<dbReference type="iPTMnet" id="Q15672"/>
<dbReference type="PhosphoSitePlus" id="Q15672"/>
<dbReference type="BioMuta" id="TWIST1"/>
<dbReference type="DMDM" id="2498009"/>
<dbReference type="jPOST" id="Q15672"/>
<dbReference type="MassIVE" id="Q15672"/>
<dbReference type="PaxDb" id="9606-ENSP00000242261"/>
<dbReference type="PeptideAtlas" id="Q15672"/>
<dbReference type="ProteomicsDB" id="60700"/>
<dbReference type="ABCD" id="Q15672">
    <property type="antibodies" value="7 sequenced antibodies"/>
</dbReference>
<dbReference type="Antibodypedia" id="11900">
    <property type="antibodies" value="653 antibodies from 40 providers"/>
</dbReference>
<dbReference type="DNASU" id="7291"/>
<dbReference type="Ensembl" id="ENST00000242261.6">
    <property type="protein sequence ID" value="ENSP00000242261.5"/>
    <property type="gene ID" value="ENSG00000122691.13"/>
</dbReference>
<dbReference type="GeneID" id="7291"/>
<dbReference type="KEGG" id="hsa:7291"/>
<dbReference type="MANE-Select" id="ENST00000242261.6">
    <property type="protein sequence ID" value="ENSP00000242261.5"/>
    <property type="RefSeq nucleotide sequence ID" value="NM_000474.4"/>
    <property type="RefSeq protein sequence ID" value="NP_000465.1"/>
</dbReference>
<dbReference type="UCSC" id="uc003sum.3">
    <property type="organism name" value="human"/>
</dbReference>
<dbReference type="AGR" id="HGNC:12428"/>
<dbReference type="CTD" id="7291"/>
<dbReference type="DisGeNET" id="7291"/>
<dbReference type="GeneCards" id="TWIST1"/>
<dbReference type="GeneReviews" id="TWIST1"/>
<dbReference type="HGNC" id="HGNC:12428">
    <property type="gene designation" value="TWIST1"/>
</dbReference>
<dbReference type="HPA" id="ENSG00000122691">
    <property type="expression patterns" value="Tissue enhanced (adipose tissue, breast)"/>
</dbReference>
<dbReference type="MalaCards" id="TWIST1"/>
<dbReference type="MIM" id="101400">
    <property type="type" value="phenotype"/>
</dbReference>
<dbReference type="MIM" id="123100">
    <property type="type" value="phenotype"/>
</dbReference>
<dbReference type="MIM" id="180750">
    <property type="type" value="phenotype"/>
</dbReference>
<dbReference type="MIM" id="601622">
    <property type="type" value="gene"/>
</dbReference>
<dbReference type="MIM" id="617746">
    <property type="type" value="phenotype"/>
</dbReference>
<dbReference type="neXtProt" id="NX_Q15672"/>
<dbReference type="OpenTargets" id="ENSG00000122691"/>
<dbReference type="Orphanet" id="35099">
    <property type="disease" value="Non-syndromic bicoronal craniosynostosis"/>
</dbReference>
<dbReference type="Orphanet" id="35093">
    <property type="disease" value="Non-syndromic sagittal craniosynostosis"/>
</dbReference>
<dbReference type="Orphanet" id="794">
    <property type="disease" value="Saethre-Chotzen syndrome"/>
</dbReference>
<dbReference type="PharmGKB" id="PA37088"/>
<dbReference type="VEuPathDB" id="HostDB:ENSG00000122691"/>
<dbReference type="eggNOG" id="KOG4447">
    <property type="taxonomic scope" value="Eukaryota"/>
</dbReference>
<dbReference type="GeneTree" id="ENSGT00940000162831"/>
<dbReference type="HOGENOM" id="CLU_112073_0_0_1"/>
<dbReference type="InParanoid" id="Q15672"/>
<dbReference type="OMA" id="XSSSAGI"/>
<dbReference type="OrthoDB" id="8583783at2759"/>
<dbReference type="PAN-GO" id="Q15672">
    <property type="GO annotations" value="4 GO annotations based on evolutionary models"/>
</dbReference>
<dbReference type="PhylomeDB" id="Q15672"/>
<dbReference type="TreeFam" id="TF315153"/>
<dbReference type="PathwayCommons" id="Q15672"/>
<dbReference type="Reactome" id="R-HSA-6785807">
    <property type="pathway name" value="Interleukin-4 and Interleukin-13 signaling"/>
</dbReference>
<dbReference type="Reactome" id="R-HSA-8878166">
    <property type="pathway name" value="Transcriptional regulation by RUNX2"/>
</dbReference>
<dbReference type="Reactome" id="R-HSA-8939902">
    <property type="pathway name" value="Regulation of RUNX2 expression and activity"/>
</dbReference>
<dbReference type="Reactome" id="R-HSA-9725371">
    <property type="pathway name" value="Nuclear events stimulated by ALK signaling in cancer"/>
</dbReference>
<dbReference type="SignaLink" id="Q15672"/>
<dbReference type="SIGNOR" id="Q15672"/>
<dbReference type="BioGRID-ORCS" id="7291">
    <property type="hits" value="17 hits in 1174 CRISPR screens"/>
</dbReference>
<dbReference type="ChiTaRS" id="TWIST1">
    <property type="organism name" value="human"/>
</dbReference>
<dbReference type="EvolutionaryTrace" id="Q15672"/>
<dbReference type="GeneWiki" id="Twist_transcription_factor"/>
<dbReference type="GenomeRNAi" id="7291"/>
<dbReference type="Pharos" id="Q15672">
    <property type="development level" value="Tbio"/>
</dbReference>
<dbReference type="PRO" id="PR:Q15672"/>
<dbReference type="Proteomes" id="UP000005640">
    <property type="component" value="Chromosome 7"/>
</dbReference>
<dbReference type="RNAct" id="Q15672">
    <property type="molecule type" value="protein"/>
</dbReference>
<dbReference type="Bgee" id="ENSG00000122691">
    <property type="expression patterns" value="Expressed in periodontal ligament and 163 other cell types or tissues"/>
</dbReference>
<dbReference type="ExpressionAtlas" id="Q15672">
    <property type="expression patterns" value="baseline and differential"/>
</dbReference>
<dbReference type="GO" id="GO:0000785">
    <property type="term" value="C:chromatin"/>
    <property type="evidence" value="ECO:0000247"/>
    <property type="project" value="NTNU_SB"/>
</dbReference>
<dbReference type="GO" id="GO:0005654">
    <property type="term" value="C:nucleoplasm"/>
    <property type="evidence" value="ECO:0000304"/>
    <property type="project" value="Reactome"/>
</dbReference>
<dbReference type="GO" id="GO:0005634">
    <property type="term" value="C:nucleus"/>
    <property type="evidence" value="ECO:0000314"/>
    <property type="project" value="UniProtKB"/>
</dbReference>
<dbReference type="GO" id="GO:0043425">
    <property type="term" value="F:bHLH transcription factor binding"/>
    <property type="evidence" value="ECO:0000353"/>
    <property type="project" value="BHF-UCL"/>
</dbReference>
<dbReference type="GO" id="GO:0000987">
    <property type="term" value="F:cis-regulatory region sequence-specific DNA binding"/>
    <property type="evidence" value="ECO:0000314"/>
    <property type="project" value="BHF-UCL"/>
</dbReference>
<dbReference type="GO" id="GO:0000981">
    <property type="term" value="F:DNA-binding transcription factor activity, RNA polymerase II-specific"/>
    <property type="evidence" value="ECO:0000314"/>
    <property type="project" value="BHF-UCL"/>
</dbReference>
<dbReference type="GO" id="GO:0140297">
    <property type="term" value="F:DNA-binding transcription factor binding"/>
    <property type="evidence" value="ECO:0000353"/>
    <property type="project" value="UniProtKB"/>
</dbReference>
<dbReference type="GO" id="GO:0001217">
    <property type="term" value="F:DNA-binding transcription repressor activity"/>
    <property type="evidence" value="ECO:0000314"/>
    <property type="project" value="BHF-UCL"/>
</dbReference>
<dbReference type="GO" id="GO:0070888">
    <property type="term" value="F:E-box binding"/>
    <property type="evidence" value="ECO:0000314"/>
    <property type="project" value="BHF-UCL"/>
</dbReference>
<dbReference type="GO" id="GO:0042826">
    <property type="term" value="F:histone deacetylase binding"/>
    <property type="evidence" value="ECO:0000250"/>
    <property type="project" value="BHF-UCL"/>
</dbReference>
<dbReference type="GO" id="GO:0019904">
    <property type="term" value="F:protein domain specific binding"/>
    <property type="evidence" value="ECO:0007669"/>
    <property type="project" value="Ensembl"/>
</dbReference>
<dbReference type="GO" id="GO:0042803">
    <property type="term" value="F:protein homodimerization activity"/>
    <property type="evidence" value="ECO:0007669"/>
    <property type="project" value="Ensembl"/>
</dbReference>
<dbReference type="GO" id="GO:0000977">
    <property type="term" value="F:RNA polymerase II transcription regulatory region sequence-specific DNA binding"/>
    <property type="evidence" value="ECO:0000318"/>
    <property type="project" value="GO_Central"/>
</dbReference>
<dbReference type="GO" id="GO:0001221">
    <property type="term" value="F:transcription coregulator binding"/>
    <property type="evidence" value="ECO:0000250"/>
    <property type="project" value="BHF-UCL"/>
</dbReference>
<dbReference type="GO" id="GO:0003180">
    <property type="term" value="P:aortic valve morphogenesis"/>
    <property type="evidence" value="ECO:0000315"/>
    <property type="project" value="BHF-UCL"/>
</dbReference>
<dbReference type="GO" id="GO:0003253">
    <property type="term" value="P:cardiac neural crest cell migration involved in outflow tract morphogenesis"/>
    <property type="evidence" value="ECO:0007669"/>
    <property type="project" value="Ensembl"/>
</dbReference>
<dbReference type="GO" id="GO:2000793">
    <property type="term" value="P:cell proliferation involved in heart valve development"/>
    <property type="evidence" value="ECO:0000315"/>
    <property type="project" value="BHF-UCL"/>
</dbReference>
<dbReference type="GO" id="GO:0071456">
    <property type="term" value="P:cellular response to hypoxia"/>
    <property type="evidence" value="ECO:0000315"/>
    <property type="project" value="BHF-UCL"/>
</dbReference>
<dbReference type="GO" id="GO:0060363">
    <property type="term" value="P:cranial suture morphogenesis"/>
    <property type="evidence" value="ECO:0000304"/>
    <property type="project" value="BHF-UCL"/>
</dbReference>
<dbReference type="GO" id="GO:0032502">
    <property type="term" value="P:developmental process"/>
    <property type="evidence" value="ECO:0000318"/>
    <property type="project" value="GO_Central"/>
</dbReference>
<dbReference type="GO" id="GO:0060900">
    <property type="term" value="P:embryonic camera-type eye formation"/>
    <property type="evidence" value="ECO:0000315"/>
    <property type="project" value="BHF-UCL"/>
</dbReference>
<dbReference type="GO" id="GO:0048701">
    <property type="term" value="P:embryonic cranial skeleton morphogenesis"/>
    <property type="evidence" value="ECO:0000315"/>
    <property type="project" value="BHF-UCL"/>
</dbReference>
<dbReference type="GO" id="GO:0042733">
    <property type="term" value="P:embryonic digit morphogenesis"/>
    <property type="evidence" value="ECO:0000304"/>
    <property type="project" value="BHF-UCL"/>
</dbReference>
<dbReference type="GO" id="GO:0035115">
    <property type="term" value="P:embryonic forelimb morphogenesis"/>
    <property type="evidence" value="ECO:0007669"/>
    <property type="project" value="Ensembl"/>
</dbReference>
<dbReference type="GO" id="GO:0035116">
    <property type="term" value="P:embryonic hindlimb morphogenesis"/>
    <property type="evidence" value="ECO:0007669"/>
    <property type="project" value="Ensembl"/>
</dbReference>
<dbReference type="GO" id="GO:0003203">
    <property type="term" value="P:endocardial cushion morphogenesis"/>
    <property type="evidence" value="ECO:0007669"/>
    <property type="project" value="Ensembl"/>
</dbReference>
<dbReference type="GO" id="GO:0097009">
    <property type="term" value="P:energy homeostasis"/>
    <property type="evidence" value="ECO:0000250"/>
    <property type="project" value="BHF-UCL"/>
</dbReference>
<dbReference type="GO" id="GO:0061029">
    <property type="term" value="P:eyelid development in camera-type eye"/>
    <property type="evidence" value="ECO:0000315"/>
    <property type="project" value="BHF-UCL"/>
</dbReference>
<dbReference type="GO" id="GO:0001701">
    <property type="term" value="P:in utero embryonic development"/>
    <property type="evidence" value="ECO:0007669"/>
    <property type="project" value="Ensembl"/>
</dbReference>
<dbReference type="GO" id="GO:0003183">
    <property type="term" value="P:mitral valve morphogenesis"/>
    <property type="evidence" value="ECO:0007669"/>
    <property type="project" value="Ensembl"/>
</dbReference>
<dbReference type="GO" id="GO:0007517">
    <property type="term" value="P:muscle organ development"/>
    <property type="evidence" value="ECO:0007669"/>
    <property type="project" value="UniProtKB-KW"/>
</dbReference>
<dbReference type="GO" id="GO:0043066">
    <property type="term" value="P:negative regulation of apoptotic process"/>
    <property type="evidence" value="ECO:0007669"/>
    <property type="project" value="Ensembl"/>
</dbReference>
<dbReference type="GO" id="GO:2000773">
    <property type="term" value="P:negative regulation of cellular senescence"/>
    <property type="evidence" value="ECO:0000315"/>
    <property type="project" value="BHF-UCL"/>
</dbReference>
<dbReference type="GO" id="GO:0043518">
    <property type="term" value="P:negative regulation of DNA damage response, signal transduction by p53 class mediator"/>
    <property type="evidence" value="ECO:0000315"/>
    <property type="project" value="BHF-UCL"/>
</dbReference>
<dbReference type="GO" id="GO:0045892">
    <property type="term" value="P:negative regulation of DNA-templated transcription"/>
    <property type="evidence" value="ECO:0000314"/>
    <property type="project" value="UniProtKB"/>
</dbReference>
<dbReference type="GO" id="GO:2000780">
    <property type="term" value="P:negative regulation of double-strand break repair"/>
    <property type="evidence" value="ECO:0000315"/>
    <property type="project" value="BHF-UCL"/>
</dbReference>
<dbReference type="GO" id="GO:0010936">
    <property type="term" value="P:negative regulation of macrophage cytokine production"/>
    <property type="evidence" value="ECO:0007669"/>
    <property type="project" value="Ensembl"/>
</dbReference>
<dbReference type="GO" id="GO:1902894">
    <property type="term" value="P:negative regulation of miRNA transcription"/>
    <property type="evidence" value="ECO:0000314"/>
    <property type="project" value="BHF-UCL"/>
</dbReference>
<dbReference type="GO" id="GO:0045668">
    <property type="term" value="P:negative regulation of osteoblast differentiation"/>
    <property type="evidence" value="ECO:0000315"/>
    <property type="project" value="BHF-UCL"/>
</dbReference>
<dbReference type="GO" id="GO:0035359">
    <property type="term" value="P:negative regulation of peroxisome proliferator activated receptor signaling pathway"/>
    <property type="evidence" value="ECO:0000250"/>
    <property type="project" value="BHF-UCL"/>
</dbReference>
<dbReference type="GO" id="GO:0051898">
    <property type="term" value="P:negative regulation of phosphatidylinositol 3-kinase/protein kinase B signal transduction"/>
    <property type="evidence" value="ECO:0000315"/>
    <property type="project" value="BHF-UCL"/>
</dbReference>
<dbReference type="GO" id="GO:0048642">
    <property type="term" value="P:negative regulation of skeletal muscle tissue development"/>
    <property type="evidence" value="ECO:0007669"/>
    <property type="project" value="Ensembl"/>
</dbReference>
<dbReference type="GO" id="GO:0000122">
    <property type="term" value="P:negative regulation of transcription by RNA polymerase II"/>
    <property type="evidence" value="ECO:0000315"/>
    <property type="project" value="BHF-UCL"/>
</dbReference>
<dbReference type="GO" id="GO:0032720">
    <property type="term" value="P:negative regulation of tumor necrosis factor production"/>
    <property type="evidence" value="ECO:0007669"/>
    <property type="project" value="Ensembl"/>
</dbReference>
<dbReference type="GO" id="GO:0001843">
    <property type="term" value="P:neural tube closure"/>
    <property type="evidence" value="ECO:0007669"/>
    <property type="project" value="Ensembl"/>
</dbReference>
<dbReference type="GO" id="GO:0001764">
    <property type="term" value="P:neuron migration"/>
    <property type="evidence" value="ECO:0007669"/>
    <property type="project" value="Ensembl"/>
</dbReference>
<dbReference type="GO" id="GO:0001503">
    <property type="term" value="P:ossification"/>
    <property type="evidence" value="ECO:0000304"/>
    <property type="project" value="BHF-UCL"/>
</dbReference>
<dbReference type="GO" id="GO:0001649">
    <property type="term" value="P:osteoblast differentiation"/>
    <property type="evidence" value="ECO:0007669"/>
    <property type="project" value="Ensembl"/>
</dbReference>
<dbReference type="GO" id="GO:0042473">
    <property type="term" value="P:outer ear morphogenesis"/>
    <property type="evidence" value="ECO:0000304"/>
    <property type="project" value="BHF-UCL"/>
</dbReference>
<dbReference type="GO" id="GO:0045766">
    <property type="term" value="P:positive regulation of angiogenesis"/>
    <property type="evidence" value="ECO:0000303"/>
    <property type="project" value="BHF-UCL"/>
</dbReference>
<dbReference type="GO" id="GO:0030335">
    <property type="term" value="P:positive regulation of cell migration"/>
    <property type="evidence" value="ECO:0000315"/>
    <property type="project" value="BHF-UCL"/>
</dbReference>
<dbReference type="GO" id="GO:2000147">
    <property type="term" value="P:positive regulation of cell motility"/>
    <property type="evidence" value="ECO:0000303"/>
    <property type="project" value="BHF-UCL"/>
</dbReference>
<dbReference type="GO" id="GO:2000144">
    <property type="term" value="P:positive regulation of DNA-templated transcription initiation"/>
    <property type="evidence" value="ECO:0000314"/>
    <property type="project" value="CACAO"/>
</dbReference>
<dbReference type="GO" id="GO:2000802">
    <property type="term" value="P:positive regulation of endocardial cushion to mesenchymal transition involved in heart valve formation"/>
    <property type="evidence" value="ECO:0007669"/>
    <property type="project" value="Ensembl"/>
</dbReference>
<dbReference type="GO" id="GO:0010718">
    <property type="term" value="P:positive regulation of epithelial to mesenchymal transition"/>
    <property type="evidence" value="ECO:0000315"/>
    <property type="project" value="BHF-UCL"/>
</dbReference>
<dbReference type="GO" id="GO:0032000">
    <property type="term" value="P:positive regulation of fatty acid beta-oxidation"/>
    <property type="evidence" value="ECO:0000315"/>
    <property type="project" value="BHF-UCL"/>
</dbReference>
<dbReference type="GO" id="GO:0010628">
    <property type="term" value="P:positive regulation of gene expression"/>
    <property type="evidence" value="ECO:0000315"/>
    <property type="project" value="BHF-UCL"/>
</dbReference>
<dbReference type="GO" id="GO:0032755">
    <property type="term" value="P:positive regulation of interleukin-6 production"/>
    <property type="evidence" value="ECO:0000315"/>
    <property type="project" value="BHF-UCL"/>
</dbReference>
<dbReference type="GO" id="GO:0071639">
    <property type="term" value="P:positive regulation of monocyte chemotactic protein-1 production"/>
    <property type="evidence" value="ECO:0000315"/>
    <property type="project" value="BHF-UCL"/>
</dbReference>
<dbReference type="GO" id="GO:0045944">
    <property type="term" value="P:positive regulation of transcription by RNA polymerase II"/>
    <property type="evidence" value="ECO:0000314"/>
    <property type="project" value="BHF-UCL"/>
</dbReference>
<dbReference type="GO" id="GO:2000679">
    <property type="term" value="P:positive regulation of transcription regulatory region DNA binding"/>
    <property type="evidence" value="ECO:0000315"/>
    <property type="project" value="BHF-UCL"/>
</dbReference>
<dbReference type="GO" id="GO:0032760">
    <property type="term" value="P:positive regulation of tumor necrosis factor production"/>
    <property type="evidence" value="ECO:0000315"/>
    <property type="project" value="BHF-UCL"/>
</dbReference>
<dbReference type="GO" id="GO:0030500">
    <property type="term" value="P:regulation of bone mineralization"/>
    <property type="evidence" value="ECO:0000315"/>
    <property type="project" value="BHF-UCL"/>
</dbReference>
<dbReference type="GO" id="GO:0006357">
    <property type="term" value="P:regulation of transcription by RNA polymerase II"/>
    <property type="evidence" value="ECO:0000318"/>
    <property type="project" value="GO_Central"/>
</dbReference>
<dbReference type="GO" id="GO:0048511">
    <property type="term" value="P:rhythmic process"/>
    <property type="evidence" value="ECO:0007669"/>
    <property type="project" value="UniProtKB-KW"/>
</dbReference>
<dbReference type="CDD" id="cd11412">
    <property type="entry name" value="bHLH_TS_TWIST1"/>
    <property type="match status" value="1"/>
</dbReference>
<dbReference type="FunFam" id="4.10.280.10:FF:000030">
    <property type="entry name" value="Twist transcription factor"/>
    <property type="match status" value="1"/>
</dbReference>
<dbReference type="Gene3D" id="4.10.280.10">
    <property type="entry name" value="Helix-loop-helix DNA-binding domain"/>
    <property type="match status" value="1"/>
</dbReference>
<dbReference type="IDEAL" id="IID00624"/>
<dbReference type="InterPro" id="IPR011598">
    <property type="entry name" value="bHLH_dom"/>
</dbReference>
<dbReference type="InterPro" id="IPR050283">
    <property type="entry name" value="E-box_TF_Regulators"/>
</dbReference>
<dbReference type="InterPro" id="IPR036638">
    <property type="entry name" value="HLH_DNA-bd_sf"/>
</dbReference>
<dbReference type="InterPro" id="IPR047093">
    <property type="entry name" value="TWIST1_bHLH"/>
</dbReference>
<dbReference type="PANTHER" id="PTHR23349">
    <property type="entry name" value="BASIC HELIX-LOOP-HELIX TRANSCRIPTION FACTOR, TWIST"/>
    <property type="match status" value="1"/>
</dbReference>
<dbReference type="PANTHER" id="PTHR23349:SF64">
    <property type="entry name" value="TWIST-RELATED PROTEIN 1"/>
    <property type="match status" value="1"/>
</dbReference>
<dbReference type="Pfam" id="PF00010">
    <property type="entry name" value="HLH"/>
    <property type="match status" value="1"/>
</dbReference>
<dbReference type="SMART" id="SM00353">
    <property type="entry name" value="HLH"/>
    <property type="match status" value="1"/>
</dbReference>
<dbReference type="SUPFAM" id="SSF47459">
    <property type="entry name" value="HLH, helix-loop-helix DNA-binding domain"/>
    <property type="match status" value="1"/>
</dbReference>
<dbReference type="PROSITE" id="PS50888">
    <property type="entry name" value="BHLH"/>
    <property type="match status" value="1"/>
</dbReference>
<name>TWST1_HUMAN</name>
<comment type="function">
    <text evidence="2 7 9">Acts as a transcriptional regulator. Inhibits myogenesis by sequestrating E proteins, inhibiting trans-activation by MEF2, and inhibiting DNA-binding by MYOD1 through physical interaction. This interaction probably involves the basic domains of both proteins. Also represses expression of pro-inflammatory cytokines such as TNFA and IL1B. Regulates cranial suture patterning and fusion. Activates transcription as a heterodimer with E proteins. Regulates gene expression differentially, depending on dimer composition. Homodimers induce expression of FGFR2 and POSTN while heterodimers repress FGFR2 and POSTN expression and induce THBS1 expression. Heterodimerization is also required for osteoblast differentiation. Represses the activity of the circadian transcriptional activator: NPAS2-BMAL1 heterodimer (By similarity).</text>
</comment>
<comment type="subunit">
    <text evidence="2">Efficient DNA binding requires dimerization with another bHLH protein. Homodimer or heterodimer with E proteins such as TCF3. ID1 binds preferentially to TCF3 but does not interact efficiently with TWIST1 so ID1 levels control the amount of TCF3 available to dimerize with TWIST1 and thus determine the type of dimer formed (By similarity).</text>
</comment>
<comment type="interaction">
    <interactant intactId="EBI-1797287">
        <id>Q15672</id>
    </interactant>
    <interactant intactId="EBI-723869">
        <id>O60885</id>
        <label>BRD4</label>
    </interactant>
    <organismsDiffer>false</organismsDiffer>
    <experiments>7</experiments>
</comment>
<comment type="interaction">
    <interactant intactId="EBI-1797287">
        <id>Q15672</id>
    </interactant>
    <interactant intactId="EBI-9345088">
        <id>O60885-1</id>
        <label>BRD4</label>
    </interactant>
    <organismsDiffer>false</organismsDiffer>
    <experiments>9</experiments>
</comment>
<comment type="interaction">
    <interactant intactId="EBI-1797287">
        <id>Q15672</id>
    </interactant>
    <interactant intactId="EBI-1646991">
        <id>P15036</id>
        <label>ETS2</label>
    </interactant>
    <organismsDiffer>false</organismsDiffer>
    <experiments>2</experiments>
</comment>
<comment type="interaction">
    <interactant intactId="EBI-1797287">
        <id>Q15672</id>
    </interactant>
    <interactant intactId="EBI-1044298">
        <id>Q9UN86</id>
        <label>G3BP2</label>
    </interactant>
    <organismsDiffer>false</organismsDiffer>
    <experiments>2</experiments>
</comment>
<comment type="interaction">
    <interactant intactId="EBI-1797287">
        <id>Q15672</id>
    </interactant>
    <interactant intactId="EBI-466029">
        <id>P42858</id>
        <label>HTT</label>
    </interactant>
    <organismsDiffer>false</organismsDiffer>
    <experiments>3</experiments>
</comment>
<comment type="interaction">
    <interactant intactId="EBI-1797287">
        <id>Q15672</id>
    </interactant>
    <interactant intactId="EBI-477430">
        <id>Q92831</id>
        <label>KAT2B</label>
    </interactant>
    <organismsDiffer>false</organismsDiffer>
    <experiments>2</experiments>
</comment>
<comment type="interaction">
    <interactant intactId="EBI-1797287">
        <id>Q15672</id>
    </interactant>
    <interactant intactId="EBI-399080">
        <id>Q92993</id>
        <label>KAT5</label>
    </interactant>
    <organismsDiffer>false</organismsDiffer>
    <experiments>2</experiments>
</comment>
<comment type="interaction">
    <interactant intactId="EBI-1797287">
        <id>Q15672</id>
    </interactant>
    <interactant intactId="EBI-1268946">
        <id>Q9NQR1</id>
        <label>KMT5A</label>
    </interactant>
    <organismsDiffer>false</organismsDiffer>
    <experiments>5</experiments>
</comment>
<comment type="interaction">
    <interactant intactId="EBI-1797287">
        <id>Q15672</id>
    </interactant>
    <interactant intactId="EBI-769645">
        <id>P15923-1</id>
        <label>TCF3</label>
    </interactant>
    <organismsDiffer>false</organismsDiffer>
    <experiments>6</experiments>
</comment>
<comment type="interaction">
    <interactant intactId="EBI-1797287">
        <id>Q15672</id>
    </interactant>
    <interactant intactId="EBI-533224">
        <id>P15884</id>
        <label>TCF4</label>
    </interactant>
    <organismsDiffer>false</organismsDiffer>
    <experiments>9</experiments>
</comment>
<comment type="interaction">
    <interactant intactId="EBI-1797287">
        <id>Q15672</id>
    </interactant>
    <interactant intactId="EBI-366083">
        <id>P04637</id>
        <label>TP53</label>
    </interactant>
    <organismsDiffer>false</organismsDiffer>
    <experiments>10</experiments>
</comment>
<comment type="subcellular location">
    <subcellularLocation>
        <location>Nucleus</location>
    </subcellularLocation>
</comment>
<comment type="tissue specificity">
    <text>Subset of mesodermal cells.</text>
</comment>
<comment type="disease" evidence="6 11 12">
    <disease id="DI-01006">
        <name>Saethre-Chotzen syndrome</name>
        <acronym>SCS</acronym>
        <description>A craniosynostosis syndrome characterized by coronal synostosis, brachycephaly, low frontal hairline, facial asymmetry, hypertelorism, broad halluces, and clinodactyly.</description>
        <dbReference type="MIM" id="101400"/>
    </disease>
    <text>The disease is caused by variants affecting the gene represented in this entry.</text>
</comment>
<comment type="disease" evidence="5">
    <disease id="DI-01004">
        <name>Robinow-Sorauf syndrome</name>
        <acronym>RSS</acronym>
        <description>An autosomal dominant syndrome characterized by craniosynostosis, asymmetry of orbits, flat face, hypertelorism, a thin, long, and pointed nose, shallow orbits, strabismus, and broad great toes with a duplication of the distal phalanx. RSS is clinically similar to Saethre-Chotzen syndrome, with the most characteristic additional feature in Robinow-Sorauf syndrome being a bifid or partially duplicated hallux.</description>
        <dbReference type="MIM" id="180750"/>
    </disease>
    <text>The disease is caused by variants affecting the gene represented in this entry.</text>
</comment>
<comment type="disease" evidence="8">
    <disease id="DI-01447">
        <name>Craniosynostosis 1</name>
        <acronym>CRS1</acronym>
        <description>A primary abnormality of skull growth involving premature fusion of one or more cranial sutures. The growth velocity of the skull often cannot match that of the developing brain resulting in an abnormal head shape and, in some cases, increased intracranial pressure, which must be treated promptly to avoid permanent neurodevelopmental disability.</description>
        <dbReference type="MIM" id="123100"/>
    </disease>
    <text>The disease is caused by variants affecting the gene represented in this entry.</text>
</comment>
<comment type="disease" evidence="10">
    <disease id="DI-05122">
        <name>Sweeney-Cox syndrome</name>
        <acronym>SWCOS</acronym>
        <description>An autosomal dominant syndrome characterized by facial dysostosis, including hypertelorism, deficiencies of the eyelids and facial bones, cleft palate/velopharyngeal insufficiency, and low-set cupped ears.</description>
        <dbReference type="MIM" id="617746"/>
    </disease>
    <text>The disease is caused by variants affecting the gene represented in this entry.</text>
</comment>
<comment type="online information" name="Atlas of Genetics and Cytogenetics in Oncology and Haematology">
    <link uri="https://atlasgeneticsoncology.org/gene/44296/TWIST1"/>
</comment>
<accession>Q15672</accession>
<accession>A4D128</accession>
<accession>Q92487</accession>
<accession>Q99804</accession>
<feature type="chain" id="PRO_0000127483" description="Twist-related protein 1">
    <location>
        <begin position="1"/>
        <end position="202"/>
    </location>
</feature>
<feature type="domain" description="bHLH" evidence="3">
    <location>
        <begin position="108"/>
        <end position="159"/>
    </location>
</feature>
<feature type="region of interest" description="Disordered" evidence="4">
    <location>
        <begin position="1"/>
        <end position="105"/>
    </location>
</feature>
<feature type="region of interest" description="Sufficient for transactivation activity" evidence="1">
    <location>
        <begin position="161"/>
        <end position="191"/>
    </location>
</feature>
<feature type="compositionally biased region" description="Low complexity" evidence="4">
    <location>
        <begin position="1"/>
        <end position="18"/>
    </location>
</feature>
<feature type="compositionally biased region" description="Basic residues" evidence="4">
    <location>
        <begin position="34"/>
        <end position="43"/>
    </location>
</feature>
<feature type="compositionally biased region" description="Gly residues" evidence="4">
    <location>
        <begin position="46"/>
        <end position="65"/>
    </location>
</feature>
<feature type="compositionally biased region" description="Gly residues" evidence="4">
    <location>
        <begin position="80"/>
        <end position="99"/>
    </location>
</feature>
<feature type="sequence variant" id="VAR_077470" description="Found in a patient with non-syndromic ventricular septal defect; uncertain significance; loss of function in negative regulation of transcription from E-cadherin promoter; dbSNP:rs545987863." evidence="9">
    <original>G</original>
    <variation>S</variation>
    <location>
        <position position="83"/>
    </location>
</feature>
<feature type="sequence variant" id="VAR_077471" description="No effect on negative regulation of transcription from E-cadherin promoter; dbSNP:rs575299986." evidence="9">
    <original>S</original>
    <variation>G</variation>
    <location>
        <position position="95"/>
    </location>
</feature>
<feature type="sequence variant" id="VAR_080515" description="In SWCOS; dbSNP:rs1554442016." evidence="10">
    <original>E</original>
    <variation>G</variation>
    <location>
        <position position="117"/>
    </location>
</feature>
<feature type="sequence variant" id="VAR_080516" description="In SWCOS; dbSNP:rs1554442016." evidence="10">
    <original>E</original>
    <variation>V</variation>
    <location>
        <position position="117"/>
    </location>
</feature>
<feature type="sequence variant" id="VAR_004495" description="In SCS; dbSNP:rs104894057." evidence="11">
    <original>Q</original>
    <variation>P</variation>
    <location>
        <position position="119"/>
    </location>
</feature>
<feature type="sequence variant" id="VAR_004496" description="In SCS; dbSNP:rs121909189." evidence="12">
    <original>L</original>
    <variation>P</variation>
    <location>
        <position position="131"/>
    </location>
</feature>
<feature type="sequence variant" id="VAR_004497" description="In SCS.">
    <original>I</original>
    <variation>IAALRKII</variation>
    <location>
        <position position="135"/>
    </location>
</feature>
<feature type="sequence variant" id="VAR_004498" description="In SCS.">
    <original>P</original>
    <variation>PKIIPTLP</variation>
    <location>
        <position position="139"/>
    </location>
</feature>
<feature type="sequence variant" id="VAR_015219" description="In SCS; variant form with features overlapping Baller-Gerold syndrome; dbSNP:rs104894059." evidence="6">
    <original>I</original>
    <variation>V</variation>
    <location>
        <position position="156"/>
    </location>
</feature>
<feature type="sequence variant" id="VAR_034985" description="In CRS1; dbSNP:rs121909190." evidence="8">
    <original>A</original>
    <variation>T</variation>
    <location>
        <position position="186"/>
    </location>
</feature>
<feature type="sequence variant" id="VAR_034986" description="In CRS1; dbSNP:rs121909191." evidence="8">
    <original>S</original>
    <variation>L</variation>
    <location>
        <position position="188"/>
    </location>
</feature>
<feature type="sequence conflict" description="In Ref. 2; CAA67664." evidence="13" ref="2">
    <original>G</original>
    <variation>A</variation>
    <location>
        <position position="32"/>
    </location>
</feature>
<feature type="sequence conflict" description="In Ref. 2; CAA67664." evidence="13" ref="2">
    <original>G</original>
    <variation>A</variation>
    <location>
        <position position="36"/>
    </location>
</feature>
<feature type="sequence conflict" description="In Ref. 1; CAA62850 and 4; CAA71821." evidence="13" ref="1 4">
    <original>S</original>
    <variation>T</variation>
    <location>
        <position position="41"/>
    </location>
</feature>
<feature type="sequence conflict" description="In Ref. 1; CAA62850 and 4; CAA71821." evidence="13" ref="1 4">
    <original>S</original>
    <variation>T</variation>
    <location>
        <position position="45"/>
    </location>
</feature>
<feature type="sequence conflict" description="In Ref. 1; CAA62850 and 4; CAA71821." evidence="13" ref="1 4">
    <location>
        <position position="56"/>
    </location>
</feature>
<feature type="sequence conflict" description="In Ref. 2; CAA67664." evidence="13" ref="2">
    <original>G</original>
    <variation>A</variation>
    <location>
        <position position="59"/>
    </location>
</feature>
<feature type="sequence conflict" description="In Ref. 2; CAA67664." evidence="13" ref="2">
    <original>G</original>
    <variation>GGGGG</variation>
    <location>
        <position position="92"/>
    </location>
</feature>
<feature type="helix" evidence="14">
    <location>
        <begin position="103"/>
        <end position="133"/>
    </location>
</feature>
<feature type="helix" evidence="14">
    <location>
        <begin position="145"/>
        <end position="164"/>
    </location>
</feature>
<reference key="1">
    <citation type="journal article" date="1997" name="Gene">
        <title>Cloning of the human twist gene: its expression is retained in adult mesodermally-derived tissues.</title>
        <authorList>
            <person name="Wang S.M."/>
            <person name="Coljee V.W."/>
            <person name="Pignolo R.J."/>
            <person name="Rotenberg M.O."/>
            <person name="Cristofalo V.J."/>
            <person name="Sierra F."/>
        </authorList>
    </citation>
    <scope>NUCLEOTIDE SEQUENCE [GENOMIC DNA]</scope>
    <source>
        <tissue>Lung</tissue>
    </source>
</reference>
<reference key="2">
    <citation type="journal article" date="1996" name="Mamm. Genome">
        <title>The human H-twist gene is located at 7p21 and encodes a B-HLH protein that is 96% similar to its murine M-twist counterpart.</title>
        <authorList>
            <person name="Bourgeois P."/>
            <person name="Stoetzel C."/>
            <person name="Bolcato-Bellemin A.-L."/>
            <person name="Mattei M.-G."/>
            <person name="Perrin-Schmitt F."/>
        </authorList>
    </citation>
    <scope>NUCLEOTIDE SEQUENCE [MRNA]</scope>
    <source>
        <tissue>Placenta</tissue>
    </source>
</reference>
<reference key="3">
    <citation type="journal article" date="1997" name="Nat. Genet.">
        <title>Mutations in TWIST, a basic helix-loop-helix transcription factor, in Saethre-Chotzen syndrome.</title>
        <authorList>
            <person name="Howard T.D."/>
            <person name="Paznekas W.A."/>
            <person name="Green E.D."/>
            <person name="Chiang L.C."/>
            <person name="Ma N."/>
            <person name="Ortiz de Luna R.I."/>
            <person name="Delgado C.G."/>
            <person name="Gonzalez-Ramos M."/>
            <person name="Kline A.D."/>
            <person name="Jabs E.W."/>
        </authorList>
    </citation>
    <scope>NUCLEOTIDE SEQUENCE [GENOMIC DNA]</scope>
    <scope>VARIANTS SCS PRO-119; ALA-ALA-LEU-ARG-LYS-ILE-ILE-135 INS AND LYS-ILE-ILE-PRO-THR-LEU-PRO-139 INS</scope>
</reference>
<reference key="4">
    <citation type="journal article" date="1997" name="Hum. Mol. Genet.">
        <title>Translocation breakpoint maps 5 kb 3-prime from TWIST in a patient affected with Saethre-Chotzen syndrome.</title>
        <authorList>
            <person name="Krebs I."/>
            <person name="Weis I."/>
            <person name="Hudler M."/>
            <person name="Rommens J.M."/>
            <person name="Roth H."/>
            <person name="Scherer S.W."/>
            <person name="Tsui L.-C."/>
            <person name="Fuchtbauer E.-M."/>
            <person name="Grzeschik K.-H."/>
            <person name="Tsuji K."/>
            <person name="Kunz J."/>
        </authorList>
    </citation>
    <scope>NUCLEOTIDE SEQUENCE [GENOMIC DNA]</scope>
</reference>
<reference key="5">
    <citation type="journal article" date="2003" name="Nature">
        <title>The DNA sequence of human chromosome 7.</title>
        <authorList>
            <person name="Hillier L.W."/>
            <person name="Fulton R.S."/>
            <person name="Fulton L.A."/>
            <person name="Graves T.A."/>
            <person name="Pepin K.H."/>
            <person name="Wagner-McPherson C."/>
            <person name="Layman D."/>
            <person name="Maas J."/>
            <person name="Jaeger S."/>
            <person name="Walker R."/>
            <person name="Wylie K."/>
            <person name="Sekhon M."/>
            <person name="Becker M.C."/>
            <person name="O'Laughlin M.D."/>
            <person name="Schaller M.E."/>
            <person name="Fewell G.A."/>
            <person name="Delehaunty K.D."/>
            <person name="Miner T.L."/>
            <person name="Nash W.E."/>
            <person name="Cordes M."/>
            <person name="Du H."/>
            <person name="Sun H."/>
            <person name="Edwards J."/>
            <person name="Bradshaw-Cordum H."/>
            <person name="Ali J."/>
            <person name="Andrews S."/>
            <person name="Isak A."/>
            <person name="Vanbrunt A."/>
            <person name="Nguyen C."/>
            <person name="Du F."/>
            <person name="Lamar B."/>
            <person name="Courtney L."/>
            <person name="Kalicki J."/>
            <person name="Ozersky P."/>
            <person name="Bielicki L."/>
            <person name="Scott K."/>
            <person name="Holmes A."/>
            <person name="Harkins R."/>
            <person name="Harris A."/>
            <person name="Strong C.M."/>
            <person name="Hou S."/>
            <person name="Tomlinson C."/>
            <person name="Dauphin-Kohlberg S."/>
            <person name="Kozlowicz-Reilly A."/>
            <person name="Leonard S."/>
            <person name="Rohlfing T."/>
            <person name="Rock S.M."/>
            <person name="Tin-Wollam A.-M."/>
            <person name="Abbott A."/>
            <person name="Minx P."/>
            <person name="Maupin R."/>
            <person name="Strowmatt C."/>
            <person name="Latreille P."/>
            <person name="Miller N."/>
            <person name="Johnson D."/>
            <person name="Murray J."/>
            <person name="Woessner J.P."/>
            <person name="Wendl M.C."/>
            <person name="Yang S.-P."/>
            <person name="Schultz B.R."/>
            <person name="Wallis J.W."/>
            <person name="Spieth J."/>
            <person name="Bieri T.A."/>
            <person name="Nelson J.O."/>
            <person name="Berkowicz N."/>
            <person name="Wohldmann P.E."/>
            <person name="Cook L.L."/>
            <person name="Hickenbotham M.T."/>
            <person name="Eldred J."/>
            <person name="Williams D."/>
            <person name="Bedell J.A."/>
            <person name="Mardis E.R."/>
            <person name="Clifton S.W."/>
            <person name="Chissoe S.L."/>
            <person name="Marra M.A."/>
            <person name="Raymond C."/>
            <person name="Haugen E."/>
            <person name="Gillett W."/>
            <person name="Zhou Y."/>
            <person name="James R."/>
            <person name="Phelps K."/>
            <person name="Iadanoto S."/>
            <person name="Bubb K."/>
            <person name="Simms E."/>
            <person name="Levy R."/>
            <person name="Clendenning J."/>
            <person name="Kaul R."/>
            <person name="Kent W.J."/>
            <person name="Furey T.S."/>
            <person name="Baertsch R.A."/>
            <person name="Brent M.R."/>
            <person name="Keibler E."/>
            <person name="Flicek P."/>
            <person name="Bork P."/>
            <person name="Suyama M."/>
            <person name="Bailey J.A."/>
            <person name="Portnoy M.E."/>
            <person name="Torrents D."/>
            <person name="Chinwalla A.T."/>
            <person name="Gish W.R."/>
            <person name="Eddy S.R."/>
            <person name="McPherson J.D."/>
            <person name="Olson M.V."/>
            <person name="Eichler E.E."/>
            <person name="Green E.D."/>
            <person name="Waterston R.H."/>
            <person name="Wilson R.K."/>
        </authorList>
    </citation>
    <scope>NUCLEOTIDE SEQUENCE [LARGE SCALE GENOMIC DNA]</scope>
</reference>
<reference key="6">
    <citation type="journal article" date="2003" name="Science">
        <title>Human chromosome 7: DNA sequence and biology.</title>
        <authorList>
            <person name="Scherer S.W."/>
            <person name="Cheung J."/>
            <person name="MacDonald J.R."/>
            <person name="Osborne L.R."/>
            <person name="Nakabayashi K."/>
            <person name="Herbrick J.-A."/>
            <person name="Carson A.R."/>
            <person name="Parker-Katiraee L."/>
            <person name="Skaug J."/>
            <person name="Khaja R."/>
            <person name="Zhang J."/>
            <person name="Hudek A.K."/>
            <person name="Li M."/>
            <person name="Haddad M."/>
            <person name="Duggan G.E."/>
            <person name="Fernandez B.A."/>
            <person name="Kanematsu E."/>
            <person name="Gentles S."/>
            <person name="Christopoulos C.C."/>
            <person name="Choufani S."/>
            <person name="Kwasnicka D."/>
            <person name="Zheng X.H."/>
            <person name="Lai Z."/>
            <person name="Nusskern D.R."/>
            <person name="Zhang Q."/>
            <person name="Gu Z."/>
            <person name="Lu F."/>
            <person name="Zeesman S."/>
            <person name="Nowaczyk M.J."/>
            <person name="Teshima I."/>
            <person name="Chitayat D."/>
            <person name="Shuman C."/>
            <person name="Weksberg R."/>
            <person name="Zackai E.H."/>
            <person name="Grebe T.A."/>
            <person name="Cox S.R."/>
            <person name="Kirkpatrick S.J."/>
            <person name="Rahman N."/>
            <person name="Friedman J.M."/>
            <person name="Heng H.H.Q."/>
            <person name="Pelicci P.G."/>
            <person name="Lo-Coco F."/>
            <person name="Belloni E."/>
            <person name="Shaffer L.G."/>
            <person name="Pober B."/>
            <person name="Morton C.C."/>
            <person name="Gusella J.F."/>
            <person name="Bruns G.A.P."/>
            <person name="Korf B.R."/>
            <person name="Quade B.J."/>
            <person name="Ligon A.H."/>
            <person name="Ferguson H."/>
            <person name="Higgins A.W."/>
            <person name="Leach N.T."/>
            <person name="Herrick S.R."/>
            <person name="Lemyre E."/>
            <person name="Farra C.G."/>
            <person name="Kim H.-G."/>
            <person name="Summers A.M."/>
            <person name="Gripp K.W."/>
            <person name="Roberts W."/>
            <person name="Szatmari P."/>
            <person name="Winsor E.J.T."/>
            <person name="Grzeschik K.-H."/>
            <person name="Teebi A."/>
            <person name="Minassian B.A."/>
            <person name="Kere J."/>
            <person name="Armengol L."/>
            <person name="Pujana M.A."/>
            <person name="Estivill X."/>
            <person name="Wilson M.D."/>
            <person name="Koop B.F."/>
            <person name="Tosi S."/>
            <person name="Moore G.E."/>
            <person name="Boright A.P."/>
            <person name="Zlotorynski E."/>
            <person name="Kerem B."/>
            <person name="Kroisel P.M."/>
            <person name="Petek E."/>
            <person name="Oscier D.G."/>
            <person name="Mould S.J."/>
            <person name="Doehner H."/>
            <person name="Doehner K."/>
            <person name="Rommens J.M."/>
            <person name="Vincent J.B."/>
            <person name="Venter J.C."/>
            <person name="Li P.W."/>
            <person name="Mural R.J."/>
            <person name="Adams M.D."/>
            <person name="Tsui L.-C."/>
        </authorList>
    </citation>
    <scope>NUCLEOTIDE SEQUENCE [LARGE SCALE GENOMIC DNA]</scope>
</reference>
<reference key="7">
    <citation type="journal article" date="2004" name="Genome Res.">
        <title>The status, quality, and expansion of the NIH full-length cDNA project: the Mammalian Gene Collection (MGC).</title>
        <authorList>
            <consortium name="The MGC Project Team"/>
        </authorList>
    </citation>
    <scope>NUCLEOTIDE SEQUENCE [LARGE SCALE MRNA]</scope>
    <source>
        <tissue>Brain</tissue>
    </source>
</reference>
<reference key="8">
    <citation type="journal article" date="2003" name="Cell">
        <title>Twist regulates cytokine gene expression through a negative feedback loop that represses NF-kappaB activity.</title>
        <authorList>
            <person name="Sosic D."/>
            <person name="Richardson J.A."/>
            <person name="Yu K."/>
            <person name="Ornitz D.M."/>
            <person name="Olson E.N."/>
        </authorList>
    </citation>
    <scope>FUNCTION</scope>
</reference>
<reference key="9">
    <citation type="journal article" date="1997" name="Nat. Genet.">
        <title>Mutations of the TWIST gene in the Saethre-Chotzen syndrome.</title>
        <authorList>
            <person name="el Ghouzzi V."/>
            <person name="le Merrer M."/>
            <person name="Perrin-Schmitt F."/>
            <person name="Lajeunie E."/>
            <person name="Benit P."/>
            <person name="Renier D."/>
            <person name="Bourgeois P."/>
            <person name="Bolcato-Bellemin A.-L."/>
            <person name="Munnich A."/>
            <person name="Bonaventure J."/>
        </authorList>
    </citation>
    <scope>VARIANTS SCS PRO-131 AND LYS-ILE-ILE-PRO-THR-LEU-PRO-139 INS</scope>
</reference>
<reference key="10">
    <citation type="journal article" date="1999" name="J. Med. Genet.">
        <title>Identification of a frameshift mutation in the gene TWIST in a family affected with Robinow-Sorauf syndrome.</title>
        <authorList>
            <person name="Kunz J."/>
            <person name="Hudler M."/>
            <person name="Fritz B."/>
        </authorList>
    </citation>
    <scope>INVOLVEMENT IN RSS</scope>
</reference>
<reference key="11">
    <citation type="journal article" date="2001" name="Am. J. Med. Genet.">
        <title>Another TWIST on Baller-Gerold syndrome.</title>
        <authorList>
            <person name="Seto M.L."/>
            <person name="Lee S.J."/>
            <person name="Sze R.W."/>
            <person name="Cunningham M.L."/>
        </authorList>
    </citation>
    <scope>VARIANT SCS VAL-156</scope>
</reference>
<reference key="12">
    <citation type="journal article" date="2007" name="Am. J. Med. Genet. A">
        <title>Isolated sagittal and coronal craniosynostosis associated with TWIST box mutations.</title>
        <authorList>
            <person name="Seto M.L."/>
            <person name="Hing A.V."/>
            <person name="Chang J."/>
            <person name="Hu M."/>
            <person name="Kapp-Simon K.A."/>
            <person name="Patel P.K."/>
            <person name="Burton B.K."/>
            <person name="Kane A.A."/>
            <person name="Smyth M.D."/>
            <person name="Hopper R."/>
            <person name="Ellenbogen R.G."/>
            <person name="Stevenson K."/>
            <person name="Speltz M.L."/>
            <person name="Cunningham M.L."/>
        </authorList>
    </citation>
    <scope>VARIANTS CRS1 THR-186 AND LEU-188</scope>
</reference>
<reference key="13">
    <citation type="journal article" date="2015" name="Pediatr. Cardiol.">
        <title>Functional analysis of two novel mutations in TWIST1 protein motifs found in ventricular septal defect patients.</title>
        <authorList>
            <person name="Deng X."/>
            <person name="Pan H."/>
            <person name="Wang J."/>
            <person name="Wang B."/>
            <person name="Cheng Z."/>
            <person name="Cheng L."/>
            <person name="Zhao L."/>
            <person name="Li H."/>
            <person name="Ma X."/>
        </authorList>
    </citation>
    <scope>VARIANTS SER-83 AND GLY-95</scope>
    <scope>FUNCTION</scope>
    <scope>CHARACTERIZATION OF VARIANTS SER-83 AND GLY-95</scope>
</reference>
<reference key="14">
    <citation type="journal article" date="2017" name="Hum. Mol. Genet.">
        <title>Localized TWIST1 and TWIST2 basic domain substitutions cause four distinct human diseases that can be modeled in Caenorhabditis elegans.</title>
        <authorList>
            <person name="Kim S."/>
            <person name="Twigg S.R.F."/>
            <person name="Scanlon V.A."/>
            <person name="Chandra A."/>
            <person name="Hansen T.J."/>
            <person name="Alsubait A."/>
            <person name="Fenwick A.L."/>
            <person name="McGowan S.J."/>
            <person name="Lord H."/>
            <person name="Lester T."/>
            <person name="Sweeney E."/>
            <person name="Weber A."/>
            <person name="Cox H."/>
            <person name="Wilkie A.O.M."/>
            <person name="Golden A."/>
            <person name="Corsi A.K."/>
        </authorList>
    </citation>
    <scope>INVOLVEMENT IN SWCOS</scope>
    <scope>VARIANTS SWCOS GLY-117 AND VAL-117</scope>
</reference>
<organism>
    <name type="scientific">Homo sapiens</name>
    <name type="common">Human</name>
    <dbReference type="NCBI Taxonomy" id="9606"/>
    <lineage>
        <taxon>Eukaryota</taxon>
        <taxon>Metazoa</taxon>
        <taxon>Chordata</taxon>
        <taxon>Craniata</taxon>
        <taxon>Vertebrata</taxon>
        <taxon>Euteleostomi</taxon>
        <taxon>Mammalia</taxon>
        <taxon>Eutheria</taxon>
        <taxon>Euarchontoglires</taxon>
        <taxon>Primates</taxon>
        <taxon>Haplorrhini</taxon>
        <taxon>Catarrhini</taxon>
        <taxon>Hominidae</taxon>
        <taxon>Homo</taxon>
    </lineage>
</organism>
<keyword id="KW-0002">3D-structure</keyword>
<keyword id="KW-0010">Activator</keyword>
<keyword id="KW-0090">Biological rhythms</keyword>
<keyword id="KW-0989">Craniosynostosis</keyword>
<keyword id="KW-0217">Developmental protein</keyword>
<keyword id="KW-0221">Differentiation</keyword>
<keyword id="KW-0225">Disease variant</keyword>
<keyword id="KW-0238">DNA-binding</keyword>
<keyword id="KW-0517">Myogenesis</keyword>
<keyword id="KW-0539">Nucleus</keyword>
<keyword id="KW-1267">Proteomics identification</keyword>
<keyword id="KW-1185">Reference proteome</keyword>
<keyword id="KW-0678">Repressor</keyword>
<keyword id="KW-0804">Transcription</keyword>
<keyword id="KW-0805">Transcription regulation</keyword>
<proteinExistence type="evidence at protein level"/>